<comment type="function">
    <text>May be involved in uptake of anionic 4-hydroxy-benzoate.</text>
</comment>
<comment type="subcellular location">
    <subcellularLocation>
        <location evidence="3">Cell membrane</location>
        <topology evidence="3">Multi-pass membrane protein</topology>
    </subcellularLocation>
</comment>
<comment type="similarity">
    <text evidence="3">Belongs to the major facilitator superfamily. Cyanate porter (TC 2.A.1.17) family.</text>
</comment>
<keyword id="KW-1003">Cell membrane</keyword>
<keyword id="KW-0472">Membrane</keyword>
<keyword id="KW-0812">Transmembrane</keyword>
<keyword id="KW-1133">Transmembrane helix</keyword>
<keyword id="KW-0813">Transport</keyword>
<organism>
    <name type="scientific">Thauera aromatica</name>
    <dbReference type="NCBI Taxonomy" id="59405"/>
    <lineage>
        <taxon>Bacteria</taxon>
        <taxon>Pseudomonadati</taxon>
        <taxon>Pseudomonadota</taxon>
        <taxon>Betaproteobacteria</taxon>
        <taxon>Rhodocyclales</taxon>
        <taxon>Zoogloeaceae</taxon>
        <taxon>Thauera</taxon>
    </lineage>
</organism>
<feature type="chain" id="PRO_0000205710" description="Putative anionic 4-hydroxy-benzoate permease">
    <location>
        <begin position="1" status="less than"/>
        <end position="164"/>
    </location>
</feature>
<feature type="transmembrane region" description="Helical" evidence="1">
    <location>
        <begin position="62"/>
        <end position="82"/>
    </location>
</feature>
<feature type="transmembrane region" description="Helical" evidence="1">
    <location>
        <begin position="97"/>
        <end position="117"/>
    </location>
</feature>
<feature type="transmembrane region" description="Helical" evidence="1">
    <location>
        <begin position="126"/>
        <end position="146"/>
    </location>
</feature>
<feature type="region of interest" description="Disordered" evidence="2">
    <location>
        <begin position="1"/>
        <end position="30"/>
    </location>
</feature>
<feature type="non-terminal residue">
    <location>
        <position position="1"/>
    </location>
</feature>
<protein>
    <recommendedName>
        <fullName>Putative anionic 4-hydroxy-benzoate permease</fullName>
    </recommendedName>
</protein>
<reference key="1">
    <citation type="journal article" date="1998" name="Eur. J. Biochem.">
        <title>4-hydroxybenzoyl-CoA reductase (dehydroxylating) from the denitrifying bacterium Thauera aromatica -- prosthetic groups, electron donor, and genes of a member of the molybdenum-flavin-iron-sulfur proteins.</title>
        <authorList>
            <person name="Breese K."/>
            <person name="Fuchs G."/>
        </authorList>
    </citation>
    <scope>NUCLEOTIDE SEQUENCE [GENOMIC DNA]</scope>
    <source>
        <strain>DSM 6984 / CIP 107765 / K172</strain>
    </source>
</reference>
<dbReference type="EMBL" id="AJ001830">
    <property type="protein sequence ID" value="CAA05040.1"/>
    <property type="molecule type" value="Genomic_DNA"/>
</dbReference>
<dbReference type="GO" id="GO:0005886">
    <property type="term" value="C:plasma membrane"/>
    <property type="evidence" value="ECO:0007669"/>
    <property type="project" value="UniProtKB-SubCell"/>
</dbReference>
<dbReference type="Gene3D" id="1.20.1250.20">
    <property type="entry name" value="MFS general substrate transporter like domains"/>
    <property type="match status" value="1"/>
</dbReference>
<dbReference type="InterPro" id="IPR052524">
    <property type="entry name" value="MFS_Cyanate_Porter"/>
</dbReference>
<dbReference type="InterPro" id="IPR036259">
    <property type="entry name" value="MFS_trans_sf"/>
</dbReference>
<dbReference type="PANTHER" id="PTHR23523">
    <property type="match status" value="1"/>
</dbReference>
<dbReference type="PANTHER" id="PTHR23523:SF2">
    <property type="entry name" value="2-NITROIMIDAZOLE TRANSPORTER"/>
    <property type="match status" value="1"/>
</dbReference>
<dbReference type="SUPFAM" id="SSF103473">
    <property type="entry name" value="MFS general substrate transporter"/>
    <property type="match status" value="1"/>
</dbReference>
<sequence length="164" mass="16863">CGRRRGSLAWPDASSPSANPRPGAGAAESSACTTSGWSRWRTSLLVAGALLGLQWLPQLAGLWVACFGFGTGACIILALMFMGLRTENPRQAAALSGMAQCVGYLLAAFGPPLVGGLRDRSQDWNPALTVCLVLSLTMAAAGMLAGRNRRIRSASTAASTPAAG</sequence>
<name>YHPR_THAAR</name>
<proteinExistence type="inferred from homology"/>
<accession>O33821</accession>
<evidence type="ECO:0000255" key="1"/>
<evidence type="ECO:0000256" key="2">
    <source>
        <dbReference type="SAM" id="MobiDB-lite"/>
    </source>
</evidence>
<evidence type="ECO:0000305" key="3"/>